<reference key="1">
    <citation type="submission" date="2007-06" db="EMBL/GenBank/DDBJ databases">
        <authorList>
            <person name="Brinkac L.M."/>
            <person name="Daugherty S."/>
            <person name="Dodson R.J."/>
            <person name="Madupu R."/>
            <person name="Brown J.L."/>
            <person name="Bruce D."/>
            <person name="Detter C."/>
            <person name="Munk C."/>
            <person name="Smith L.A."/>
            <person name="Smith T.J."/>
            <person name="White O."/>
            <person name="Brettin T.S."/>
        </authorList>
    </citation>
    <scope>NUCLEOTIDE SEQUENCE [LARGE SCALE GENOMIC DNA]</scope>
    <source>
        <strain>Langeland / NCTC 10281 / Type F</strain>
    </source>
</reference>
<accession>A7GHT9</accession>
<organism>
    <name type="scientific">Clostridium botulinum (strain Langeland / NCTC 10281 / Type F)</name>
    <dbReference type="NCBI Taxonomy" id="441772"/>
    <lineage>
        <taxon>Bacteria</taxon>
        <taxon>Bacillati</taxon>
        <taxon>Bacillota</taxon>
        <taxon>Clostridia</taxon>
        <taxon>Eubacteriales</taxon>
        <taxon>Clostridiaceae</taxon>
        <taxon>Clostridium</taxon>
    </lineage>
</organism>
<sequence length="197" mass="22229">MYEYIKGKYIDMYKDYIVIENNNIGYKIYTSGSTMAKLPSIGENIMLYTEQIVREDFIGVYGFLTKDELSMFKLLLTINGVGAKASLSLLSISNVSTLKYAIKMGDEKTITRAPGIGKKTAQRIILELKDKIEIDILEEDDEQIINKVTDDKKVLEAVAALVTLGYSEKEANKVINSCDKNNSLEQIIKEALKYLMK</sequence>
<name>RUVA_CLOBL</name>
<proteinExistence type="inferred from homology"/>
<keyword id="KW-0963">Cytoplasm</keyword>
<keyword id="KW-0227">DNA damage</keyword>
<keyword id="KW-0233">DNA recombination</keyword>
<keyword id="KW-0234">DNA repair</keyword>
<keyword id="KW-0238">DNA-binding</keyword>
<evidence type="ECO:0000255" key="1">
    <source>
        <dbReference type="HAMAP-Rule" id="MF_00031"/>
    </source>
</evidence>
<feature type="chain" id="PRO_1000002432" description="Holliday junction branch migration complex subunit RuvA">
    <location>
        <begin position="1"/>
        <end position="197"/>
    </location>
</feature>
<feature type="region of interest" description="Domain I" evidence="1">
    <location>
        <begin position="1"/>
        <end position="64"/>
    </location>
</feature>
<feature type="region of interest" description="Domain II" evidence="1">
    <location>
        <begin position="65"/>
        <end position="144"/>
    </location>
</feature>
<feature type="region of interest" description="Flexible linker" evidence="1">
    <location>
        <begin position="145"/>
        <end position="149"/>
    </location>
</feature>
<feature type="region of interest" description="Domain III" evidence="1">
    <location>
        <begin position="149"/>
        <end position="197"/>
    </location>
</feature>
<dbReference type="EMBL" id="CP000728">
    <property type="protein sequence ID" value="ABS39904.1"/>
    <property type="molecule type" value="Genomic_DNA"/>
</dbReference>
<dbReference type="RefSeq" id="WP_003357846.1">
    <property type="nucleotide sequence ID" value="NC_009699.1"/>
</dbReference>
<dbReference type="SMR" id="A7GHT9"/>
<dbReference type="KEGG" id="cbf:CLI_3130"/>
<dbReference type="HOGENOM" id="CLU_087936_3_0_9"/>
<dbReference type="Proteomes" id="UP000002410">
    <property type="component" value="Chromosome"/>
</dbReference>
<dbReference type="GO" id="GO:0005737">
    <property type="term" value="C:cytoplasm"/>
    <property type="evidence" value="ECO:0007669"/>
    <property type="project" value="UniProtKB-SubCell"/>
</dbReference>
<dbReference type="GO" id="GO:0009379">
    <property type="term" value="C:Holliday junction helicase complex"/>
    <property type="evidence" value="ECO:0007669"/>
    <property type="project" value="InterPro"/>
</dbReference>
<dbReference type="GO" id="GO:0048476">
    <property type="term" value="C:Holliday junction resolvase complex"/>
    <property type="evidence" value="ECO:0007669"/>
    <property type="project" value="UniProtKB-UniRule"/>
</dbReference>
<dbReference type="GO" id="GO:0005524">
    <property type="term" value="F:ATP binding"/>
    <property type="evidence" value="ECO:0007669"/>
    <property type="project" value="InterPro"/>
</dbReference>
<dbReference type="GO" id="GO:0000400">
    <property type="term" value="F:four-way junction DNA binding"/>
    <property type="evidence" value="ECO:0007669"/>
    <property type="project" value="UniProtKB-UniRule"/>
</dbReference>
<dbReference type="GO" id="GO:0009378">
    <property type="term" value="F:four-way junction helicase activity"/>
    <property type="evidence" value="ECO:0007669"/>
    <property type="project" value="InterPro"/>
</dbReference>
<dbReference type="GO" id="GO:0006310">
    <property type="term" value="P:DNA recombination"/>
    <property type="evidence" value="ECO:0007669"/>
    <property type="project" value="UniProtKB-UniRule"/>
</dbReference>
<dbReference type="GO" id="GO:0006281">
    <property type="term" value="P:DNA repair"/>
    <property type="evidence" value="ECO:0007669"/>
    <property type="project" value="UniProtKB-UniRule"/>
</dbReference>
<dbReference type="CDD" id="cd14332">
    <property type="entry name" value="UBA_RuvA_C"/>
    <property type="match status" value="1"/>
</dbReference>
<dbReference type="Gene3D" id="1.10.150.20">
    <property type="entry name" value="5' to 3' exonuclease, C-terminal subdomain"/>
    <property type="match status" value="1"/>
</dbReference>
<dbReference type="Gene3D" id="1.10.8.10">
    <property type="entry name" value="DNA helicase RuvA subunit, C-terminal domain"/>
    <property type="match status" value="1"/>
</dbReference>
<dbReference type="Gene3D" id="2.40.50.140">
    <property type="entry name" value="Nucleic acid-binding proteins"/>
    <property type="match status" value="1"/>
</dbReference>
<dbReference type="HAMAP" id="MF_00031">
    <property type="entry name" value="DNA_HJ_migration_RuvA"/>
    <property type="match status" value="1"/>
</dbReference>
<dbReference type="InterPro" id="IPR013849">
    <property type="entry name" value="DNA_helicase_Holl-junc_RuvA_I"/>
</dbReference>
<dbReference type="InterPro" id="IPR012340">
    <property type="entry name" value="NA-bd_OB-fold"/>
</dbReference>
<dbReference type="InterPro" id="IPR000085">
    <property type="entry name" value="RuvA"/>
</dbReference>
<dbReference type="InterPro" id="IPR010994">
    <property type="entry name" value="RuvA_2-like"/>
</dbReference>
<dbReference type="InterPro" id="IPR011114">
    <property type="entry name" value="RuvA_C"/>
</dbReference>
<dbReference type="InterPro" id="IPR036267">
    <property type="entry name" value="RuvA_C_sf"/>
</dbReference>
<dbReference type="NCBIfam" id="TIGR00084">
    <property type="entry name" value="ruvA"/>
    <property type="match status" value="1"/>
</dbReference>
<dbReference type="Pfam" id="PF14520">
    <property type="entry name" value="HHH_5"/>
    <property type="match status" value="1"/>
</dbReference>
<dbReference type="Pfam" id="PF07499">
    <property type="entry name" value="RuvA_C"/>
    <property type="match status" value="1"/>
</dbReference>
<dbReference type="Pfam" id="PF01330">
    <property type="entry name" value="RuvA_N"/>
    <property type="match status" value="1"/>
</dbReference>
<dbReference type="SUPFAM" id="SSF46929">
    <property type="entry name" value="DNA helicase RuvA subunit, C-terminal domain"/>
    <property type="match status" value="1"/>
</dbReference>
<dbReference type="SUPFAM" id="SSF50249">
    <property type="entry name" value="Nucleic acid-binding proteins"/>
    <property type="match status" value="1"/>
</dbReference>
<dbReference type="SUPFAM" id="SSF47781">
    <property type="entry name" value="RuvA domain 2-like"/>
    <property type="match status" value="1"/>
</dbReference>
<gene>
    <name evidence="1" type="primary">ruvA</name>
    <name type="ordered locus">CLI_3130</name>
</gene>
<comment type="function">
    <text evidence="1">The RuvA-RuvB-RuvC complex processes Holliday junction (HJ) DNA during genetic recombination and DNA repair, while the RuvA-RuvB complex plays an important role in the rescue of blocked DNA replication forks via replication fork reversal (RFR). RuvA specifically binds to HJ cruciform DNA, conferring on it an open structure. The RuvB hexamer acts as an ATP-dependent pump, pulling dsDNA into and through the RuvAB complex. HJ branch migration allows RuvC to scan DNA until it finds its consensus sequence, where it cleaves and resolves the cruciform DNA.</text>
</comment>
<comment type="subunit">
    <text evidence="1">Homotetramer. Forms an RuvA(8)-RuvB(12)-Holliday junction (HJ) complex. HJ DNA is sandwiched between 2 RuvA tetramers; dsDNA enters through RuvA and exits via RuvB. An RuvB hexamer assembles on each DNA strand where it exits the tetramer. Each RuvB hexamer is contacted by two RuvA subunits (via domain III) on 2 adjacent RuvB subunits; this complex drives branch migration. In the full resolvosome a probable DNA-RuvA(4)-RuvB(12)-RuvC(2) complex forms which resolves the HJ.</text>
</comment>
<comment type="subcellular location">
    <subcellularLocation>
        <location evidence="1">Cytoplasm</location>
    </subcellularLocation>
</comment>
<comment type="domain">
    <text evidence="1">Has three domains with a flexible linker between the domains II and III and assumes an 'L' shape. Domain III is highly mobile and contacts RuvB.</text>
</comment>
<comment type="similarity">
    <text evidence="1">Belongs to the RuvA family.</text>
</comment>
<protein>
    <recommendedName>
        <fullName evidence="1">Holliday junction branch migration complex subunit RuvA</fullName>
    </recommendedName>
</protein>